<proteinExistence type="inferred from homology"/>
<comment type="function">
    <text evidence="1">One of the primary rRNA binding proteins, it binds directly to 16S rRNA where it nucleates assembly of the head domain of the 30S subunit. Is located at the subunit interface close to the decoding center, probably blocks exit of the E-site tRNA.</text>
</comment>
<comment type="subunit">
    <text evidence="1">Part of the 30S ribosomal subunit. Contacts proteins S9 and S11.</text>
</comment>
<comment type="similarity">
    <text evidence="1">Belongs to the universal ribosomal protein uS7 family.</text>
</comment>
<keyword id="KW-1185">Reference proteome</keyword>
<keyword id="KW-0687">Ribonucleoprotein</keyword>
<keyword id="KW-0689">Ribosomal protein</keyword>
<keyword id="KW-0694">RNA-binding</keyword>
<keyword id="KW-0699">rRNA-binding</keyword>
<keyword id="KW-0820">tRNA-binding</keyword>
<sequence length="156" mass="17873">MPRKGHVQKREVMPDPVYDDKTVTKLINNIMLDGKKGTAQKIVYGAFDIIKETTGEDALEVFYKAMNNIMPILEVKTRRIGGANYQVPIEVRPERRQTLGLRWLTTYTRARGEKTMVEKLAKEIMDAANNTGASVKKREDVHKMAEANKAFAHYRY</sequence>
<feature type="chain" id="PRO_1000125948" description="Small ribosomal subunit protein uS7">
    <location>
        <begin position="1"/>
        <end position="156"/>
    </location>
</feature>
<dbReference type="EMBL" id="AP008971">
    <property type="protein sequence ID" value="BAG07909.1"/>
    <property type="molecule type" value="Genomic_DNA"/>
</dbReference>
<dbReference type="RefSeq" id="WP_002835373.1">
    <property type="nucleotide sequence ID" value="NC_010376.1"/>
</dbReference>
<dbReference type="SMR" id="B0S0I3"/>
<dbReference type="STRING" id="334413.FMG_0491"/>
<dbReference type="GeneID" id="60839858"/>
<dbReference type="KEGG" id="fma:FMG_0491"/>
<dbReference type="eggNOG" id="COG0049">
    <property type="taxonomic scope" value="Bacteria"/>
</dbReference>
<dbReference type="HOGENOM" id="CLU_072226_1_1_9"/>
<dbReference type="Proteomes" id="UP000001319">
    <property type="component" value="Chromosome"/>
</dbReference>
<dbReference type="GO" id="GO:0015935">
    <property type="term" value="C:small ribosomal subunit"/>
    <property type="evidence" value="ECO:0007669"/>
    <property type="project" value="InterPro"/>
</dbReference>
<dbReference type="GO" id="GO:0019843">
    <property type="term" value="F:rRNA binding"/>
    <property type="evidence" value="ECO:0007669"/>
    <property type="project" value="UniProtKB-UniRule"/>
</dbReference>
<dbReference type="GO" id="GO:0003735">
    <property type="term" value="F:structural constituent of ribosome"/>
    <property type="evidence" value="ECO:0007669"/>
    <property type="project" value="InterPro"/>
</dbReference>
<dbReference type="GO" id="GO:0000049">
    <property type="term" value="F:tRNA binding"/>
    <property type="evidence" value="ECO:0007669"/>
    <property type="project" value="UniProtKB-UniRule"/>
</dbReference>
<dbReference type="GO" id="GO:0006412">
    <property type="term" value="P:translation"/>
    <property type="evidence" value="ECO:0007669"/>
    <property type="project" value="UniProtKB-UniRule"/>
</dbReference>
<dbReference type="CDD" id="cd14869">
    <property type="entry name" value="uS7_Bacteria"/>
    <property type="match status" value="1"/>
</dbReference>
<dbReference type="FunFam" id="1.10.455.10:FF:000001">
    <property type="entry name" value="30S ribosomal protein S7"/>
    <property type="match status" value="1"/>
</dbReference>
<dbReference type="Gene3D" id="1.10.455.10">
    <property type="entry name" value="Ribosomal protein S7 domain"/>
    <property type="match status" value="1"/>
</dbReference>
<dbReference type="HAMAP" id="MF_00480_B">
    <property type="entry name" value="Ribosomal_uS7_B"/>
    <property type="match status" value="1"/>
</dbReference>
<dbReference type="InterPro" id="IPR000235">
    <property type="entry name" value="Ribosomal_uS7"/>
</dbReference>
<dbReference type="InterPro" id="IPR005717">
    <property type="entry name" value="Ribosomal_uS7_bac/org-type"/>
</dbReference>
<dbReference type="InterPro" id="IPR020606">
    <property type="entry name" value="Ribosomal_uS7_CS"/>
</dbReference>
<dbReference type="InterPro" id="IPR023798">
    <property type="entry name" value="Ribosomal_uS7_dom"/>
</dbReference>
<dbReference type="InterPro" id="IPR036823">
    <property type="entry name" value="Ribosomal_uS7_dom_sf"/>
</dbReference>
<dbReference type="NCBIfam" id="TIGR01029">
    <property type="entry name" value="rpsG_bact"/>
    <property type="match status" value="1"/>
</dbReference>
<dbReference type="PANTHER" id="PTHR11205">
    <property type="entry name" value="RIBOSOMAL PROTEIN S7"/>
    <property type="match status" value="1"/>
</dbReference>
<dbReference type="Pfam" id="PF00177">
    <property type="entry name" value="Ribosomal_S7"/>
    <property type="match status" value="1"/>
</dbReference>
<dbReference type="PIRSF" id="PIRSF002122">
    <property type="entry name" value="RPS7p_RPS7a_RPS5e_RPS7o"/>
    <property type="match status" value="1"/>
</dbReference>
<dbReference type="SUPFAM" id="SSF47973">
    <property type="entry name" value="Ribosomal protein S7"/>
    <property type="match status" value="1"/>
</dbReference>
<dbReference type="PROSITE" id="PS00052">
    <property type="entry name" value="RIBOSOMAL_S7"/>
    <property type="match status" value="1"/>
</dbReference>
<name>RS7_FINM2</name>
<accession>B0S0I3</accession>
<protein>
    <recommendedName>
        <fullName evidence="1">Small ribosomal subunit protein uS7</fullName>
    </recommendedName>
    <alternativeName>
        <fullName evidence="2">30S ribosomal protein S7</fullName>
    </alternativeName>
</protein>
<organism>
    <name type="scientific">Finegoldia magna (strain ATCC 29328 / DSM 20472 / WAL 2508)</name>
    <name type="common">Peptostreptococcus magnus</name>
    <dbReference type="NCBI Taxonomy" id="334413"/>
    <lineage>
        <taxon>Bacteria</taxon>
        <taxon>Bacillati</taxon>
        <taxon>Bacillota</taxon>
        <taxon>Tissierellia</taxon>
        <taxon>Tissierellales</taxon>
        <taxon>Peptoniphilaceae</taxon>
        <taxon>Finegoldia</taxon>
    </lineage>
</organism>
<gene>
    <name evidence="1" type="primary">rpsG</name>
    <name type="ordered locus">FMG_0491</name>
</gene>
<evidence type="ECO:0000255" key="1">
    <source>
        <dbReference type="HAMAP-Rule" id="MF_00480"/>
    </source>
</evidence>
<evidence type="ECO:0000305" key="2"/>
<reference key="1">
    <citation type="journal article" date="2008" name="DNA Res.">
        <title>Complete genome sequence of Finegoldia magna, an anaerobic opportunistic pathogen.</title>
        <authorList>
            <person name="Goto T."/>
            <person name="Yamashita A."/>
            <person name="Hirakawa H."/>
            <person name="Matsutani M."/>
            <person name="Todo K."/>
            <person name="Ohshima K."/>
            <person name="Toh H."/>
            <person name="Miyamoto K."/>
            <person name="Kuhara S."/>
            <person name="Hattori M."/>
            <person name="Shimizu T."/>
            <person name="Akimoto S."/>
        </authorList>
    </citation>
    <scope>NUCLEOTIDE SEQUENCE [LARGE SCALE GENOMIC DNA]</scope>
    <source>
        <strain>ATCC 29328 / DSM 20472 / WAL 2508</strain>
    </source>
</reference>